<feature type="chain" id="PRO_0000109413" description="Pyridoxal 5'-phosphate synthase subunit PdxS">
    <location>
        <begin position="1"/>
        <end position="295"/>
    </location>
</feature>
<feature type="active site" description="Schiff-base intermediate with D-ribose 5-phosphate" evidence="1">
    <location>
        <position position="82"/>
    </location>
</feature>
<feature type="binding site" evidence="1">
    <location>
        <position position="25"/>
    </location>
    <ligand>
        <name>D-ribose 5-phosphate</name>
        <dbReference type="ChEBI" id="CHEBI:78346"/>
    </ligand>
</feature>
<feature type="binding site" evidence="1">
    <location>
        <position position="154"/>
    </location>
    <ligand>
        <name>D-ribose 5-phosphate</name>
        <dbReference type="ChEBI" id="CHEBI:78346"/>
    </ligand>
</feature>
<feature type="binding site" evidence="1">
    <location>
        <position position="166"/>
    </location>
    <ligand>
        <name>D-glyceraldehyde 3-phosphate</name>
        <dbReference type="ChEBI" id="CHEBI:59776"/>
    </ligand>
</feature>
<feature type="binding site" evidence="1">
    <location>
        <position position="215"/>
    </location>
    <ligand>
        <name>D-ribose 5-phosphate</name>
        <dbReference type="ChEBI" id="CHEBI:78346"/>
    </ligand>
</feature>
<feature type="binding site" evidence="1">
    <location>
        <begin position="236"/>
        <end position="237"/>
    </location>
    <ligand>
        <name>D-ribose 5-phosphate</name>
        <dbReference type="ChEBI" id="CHEBI:78346"/>
    </ligand>
</feature>
<keyword id="KW-0456">Lyase</keyword>
<keyword id="KW-0663">Pyridoxal phosphate</keyword>
<keyword id="KW-0704">Schiff base</keyword>
<proteinExistence type="evidence at protein level"/>
<protein>
    <recommendedName>
        <fullName evidence="1">Pyridoxal 5'-phosphate synthase subunit PdxS</fullName>
        <shortName evidence="1">PLP synthase subunit PdxS</shortName>
        <ecNumber evidence="1">4.3.3.6</ecNumber>
    </recommendedName>
    <alternativeName>
        <fullName evidence="1">Pdx1</fullName>
    </alternativeName>
</protein>
<gene>
    <name evidence="1" type="primary">pdxS</name>
    <name type="ordered locus">SA0477</name>
</gene>
<comment type="function">
    <text evidence="1">Catalyzes the formation of pyridoxal 5'-phosphate from ribose 5-phosphate (RBP), glyceraldehyde 3-phosphate (G3P) and ammonia. The ammonia is provided by the PdxT subunit. Can also use ribulose 5-phosphate and dihydroxyacetone phosphate as substrates, resulting from enzyme-catalyzed isomerization of RBP and G3P, respectively.</text>
</comment>
<comment type="catalytic activity">
    <reaction evidence="1">
        <text>aldehydo-D-ribose 5-phosphate + D-glyceraldehyde 3-phosphate + L-glutamine = pyridoxal 5'-phosphate + L-glutamate + phosphate + 3 H2O + H(+)</text>
        <dbReference type="Rhea" id="RHEA:31507"/>
        <dbReference type="ChEBI" id="CHEBI:15377"/>
        <dbReference type="ChEBI" id="CHEBI:15378"/>
        <dbReference type="ChEBI" id="CHEBI:29985"/>
        <dbReference type="ChEBI" id="CHEBI:43474"/>
        <dbReference type="ChEBI" id="CHEBI:58273"/>
        <dbReference type="ChEBI" id="CHEBI:58359"/>
        <dbReference type="ChEBI" id="CHEBI:59776"/>
        <dbReference type="ChEBI" id="CHEBI:597326"/>
        <dbReference type="EC" id="4.3.3.6"/>
    </reaction>
</comment>
<comment type="pathway">
    <text evidence="1">Cofactor biosynthesis; pyridoxal 5'-phosphate biosynthesis.</text>
</comment>
<comment type="subunit">
    <text evidence="1">In the presence of PdxT, forms a dodecamer of heterodimers.</text>
</comment>
<comment type="similarity">
    <text evidence="1">Belongs to the PdxS/SNZ family.</text>
</comment>
<organism>
    <name type="scientific">Staphylococcus aureus (strain N315)</name>
    <dbReference type="NCBI Taxonomy" id="158879"/>
    <lineage>
        <taxon>Bacteria</taxon>
        <taxon>Bacillati</taxon>
        <taxon>Bacillota</taxon>
        <taxon>Bacilli</taxon>
        <taxon>Bacillales</taxon>
        <taxon>Staphylococcaceae</taxon>
        <taxon>Staphylococcus</taxon>
    </lineage>
</organism>
<reference key="1">
    <citation type="journal article" date="2001" name="Lancet">
        <title>Whole genome sequencing of meticillin-resistant Staphylococcus aureus.</title>
        <authorList>
            <person name="Kuroda M."/>
            <person name="Ohta T."/>
            <person name="Uchiyama I."/>
            <person name="Baba T."/>
            <person name="Yuzawa H."/>
            <person name="Kobayashi I."/>
            <person name="Cui L."/>
            <person name="Oguchi A."/>
            <person name="Aoki K."/>
            <person name="Nagai Y."/>
            <person name="Lian J.-Q."/>
            <person name="Ito T."/>
            <person name="Kanamori M."/>
            <person name="Matsumaru H."/>
            <person name="Maruyama A."/>
            <person name="Murakami H."/>
            <person name="Hosoyama A."/>
            <person name="Mizutani-Ui Y."/>
            <person name="Takahashi N.K."/>
            <person name="Sawano T."/>
            <person name="Inoue R."/>
            <person name="Kaito C."/>
            <person name="Sekimizu K."/>
            <person name="Hirakawa H."/>
            <person name="Kuhara S."/>
            <person name="Goto S."/>
            <person name="Yabuzaki J."/>
            <person name="Kanehisa M."/>
            <person name="Yamashita A."/>
            <person name="Oshima K."/>
            <person name="Furuya K."/>
            <person name="Yoshino C."/>
            <person name="Shiba T."/>
            <person name="Hattori M."/>
            <person name="Ogasawara N."/>
            <person name="Hayashi H."/>
            <person name="Hiramatsu K."/>
        </authorList>
    </citation>
    <scope>NUCLEOTIDE SEQUENCE [LARGE SCALE GENOMIC DNA]</scope>
    <source>
        <strain>N315</strain>
    </source>
</reference>
<reference key="2">
    <citation type="journal article" date="2005" name="J. Microbiol. Methods">
        <title>Correlation of proteomic and transcriptomic profiles of Staphylococcus aureus during the post-exponential phase of growth.</title>
        <authorList>
            <person name="Scherl A."/>
            <person name="Francois P."/>
            <person name="Bento M."/>
            <person name="Deshusses J.M."/>
            <person name="Charbonnier Y."/>
            <person name="Converset V."/>
            <person name="Huyghe A."/>
            <person name="Walter N."/>
            <person name="Hoogland C."/>
            <person name="Appel R.D."/>
            <person name="Sanchez J.-C."/>
            <person name="Zimmermann-Ivol C.G."/>
            <person name="Corthals G.L."/>
            <person name="Hochstrasser D.F."/>
            <person name="Schrenzel J."/>
        </authorList>
    </citation>
    <scope>IDENTIFICATION BY MASS SPECTROMETRY</scope>
    <source>
        <strain>N315</strain>
    </source>
</reference>
<reference key="3">
    <citation type="submission" date="2007-10" db="UniProtKB">
        <title>Shotgun proteomic analysis of total and membrane protein extracts of S. aureus strain N315.</title>
        <authorList>
            <person name="Vaezzadeh A.R."/>
            <person name="Deshusses J."/>
            <person name="Lescuyer P."/>
            <person name="Hochstrasser D.F."/>
        </authorList>
    </citation>
    <scope>IDENTIFICATION BY MASS SPECTROMETRY [LARGE SCALE ANALYSIS]</scope>
    <source>
        <strain>N315</strain>
    </source>
</reference>
<accession>P60798</accession>
<accession>Q99W84</accession>
<dbReference type="EC" id="4.3.3.6" evidence="1"/>
<dbReference type="EMBL" id="BA000018">
    <property type="protein sequence ID" value="BAB41707.1"/>
    <property type="molecule type" value="Genomic_DNA"/>
</dbReference>
<dbReference type="PIR" id="H89818">
    <property type="entry name" value="H89818"/>
</dbReference>
<dbReference type="RefSeq" id="WP_000034728.1">
    <property type="nucleotide sequence ID" value="NC_002745.2"/>
</dbReference>
<dbReference type="SMR" id="P60798"/>
<dbReference type="EnsemblBacteria" id="BAB41707">
    <property type="protein sequence ID" value="BAB41707"/>
    <property type="gene ID" value="BAB41707"/>
</dbReference>
<dbReference type="GeneID" id="66838811"/>
<dbReference type="KEGG" id="sau:SA0477"/>
<dbReference type="HOGENOM" id="CLU_055352_1_0_9"/>
<dbReference type="UniPathway" id="UPA00245"/>
<dbReference type="GO" id="GO:0036381">
    <property type="term" value="F:pyridoxal 5'-phosphate synthase (glutamine hydrolysing) activity"/>
    <property type="evidence" value="ECO:0007669"/>
    <property type="project" value="UniProtKB-UniRule"/>
</dbReference>
<dbReference type="GO" id="GO:0006520">
    <property type="term" value="P:amino acid metabolic process"/>
    <property type="evidence" value="ECO:0007669"/>
    <property type="project" value="TreeGrafter"/>
</dbReference>
<dbReference type="GO" id="GO:0042823">
    <property type="term" value="P:pyridoxal phosphate biosynthetic process"/>
    <property type="evidence" value="ECO:0007669"/>
    <property type="project" value="UniProtKB-UniRule"/>
</dbReference>
<dbReference type="GO" id="GO:0008615">
    <property type="term" value="P:pyridoxine biosynthetic process"/>
    <property type="evidence" value="ECO:0007669"/>
    <property type="project" value="TreeGrafter"/>
</dbReference>
<dbReference type="CDD" id="cd04727">
    <property type="entry name" value="pdxS"/>
    <property type="match status" value="1"/>
</dbReference>
<dbReference type="FunFam" id="3.20.20.70:FF:000001">
    <property type="entry name" value="Pyridoxine biosynthesis protein PDX1"/>
    <property type="match status" value="1"/>
</dbReference>
<dbReference type="Gene3D" id="3.20.20.70">
    <property type="entry name" value="Aldolase class I"/>
    <property type="match status" value="1"/>
</dbReference>
<dbReference type="HAMAP" id="MF_01824">
    <property type="entry name" value="PdxS"/>
    <property type="match status" value="1"/>
</dbReference>
<dbReference type="InterPro" id="IPR013785">
    <property type="entry name" value="Aldolase_TIM"/>
</dbReference>
<dbReference type="InterPro" id="IPR001852">
    <property type="entry name" value="PdxS/SNZ"/>
</dbReference>
<dbReference type="InterPro" id="IPR033755">
    <property type="entry name" value="PdxS/SNZ_N"/>
</dbReference>
<dbReference type="InterPro" id="IPR011060">
    <property type="entry name" value="RibuloseP-bd_barrel"/>
</dbReference>
<dbReference type="NCBIfam" id="NF003215">
    <property type="entry name" value="PRK04180.1"/>
    <property type="match status" value="1"/>
</dbReference>
<dbReference type="NCBIfam" id="TIGR00343">
    <property type="entry name" value="pyridoxal 5'-phosphate synthase lyase subunit PdxS"/>
    <property type="match status" value="1"/>
</dbReference>
<dbReference type="PANTHER" id="PTHR31829">
    <property type="entry name" value="PYRIDOXAL 5'-PHOSPHATE SYNTHASE SUBUNIT SNZ1-RELATED"/>
    <property type="match status" value="1"/>
</dbReference>
<dbReference type="PANTHER" id="PTHR31829:SF0">
    <property type="entry name" value="PYRIDOXAL 5'-PHOSPHATE SYNTHASE SUBUNIT SNZ1-RELATED"/>
    <property type="match status" value="1"/>
</dbReference>
<dbReference type="Pfam" id="PF01680">
    <property type="entry name" value="SOR_SNZ"/>
    <property type="match status" value="1"/>
</dbReference>
<dbReference type="PIRSF" id="PIRSF029271">
    <property type="entry name" value="Pdx1"/>
    <property type="match status" value="1"/>
</dbReference>
<dbReference type="SUPFAM" id="SSF51366">
    <property type="entry name" value="Ribulose-phoshate binding barrel"/>
    <property type="match status" value="1"/>
</dbReference>
<dbReference type="PROSITE" id="PS01235">
    <property type="entry name" value="PDXS_SNZ_1"/>
    <property type="match status" value="1"/>
</dbReference>
<dbReference type="PROSITE" id="PS51129">
    <property type="entry name" value="PDXS_SNZ_2"/>
    <property type="match status" value="1"/>
</dbReference>
<sequence length="295" mass="31993">MSKIIGSDRVKRGMAEMQKGGVIMDVVNAEQARIAEEAGAVAVMALERVPSDIRAAGGVARMANPKIVEEVMNAVSIPVMAKARIGHITEARVLEAMGVDYIDESEVLTPADEEYHLRKDQFTVPFVCGCRNLGEAARRIGEGAAMLRTKGEPGTGNIVEAVRHMRQVNSEVSRLTVMNDDEIMTFAKDIGAPYEILKQIKDNGRLPVVNFAAGGVATPQDAALMMELGADGVFVGSGIFKSEDPEKFAKAIVQATTHYQDYELIGRLASELGTAMKGLDINQLSLEERMQERGW</sequence>
<evidence type="ECO:0000255" key="1">
    <source>
        <dbReference type="HAMAP-Rule" id="MF_01824"/>
    </source>
</evidence>
<name>PDXS_STAAN</name>